<proteinExistence type="inferred from homology"/>
<name>PSD_PECAS</name>
<comment type="function">
    <text evidence="1">Catalyzes the formation of phosphatidylethanolamine (PtdEtn) from phosphatidylserine (PtdSer).</text>
</comment>
<comment type="catalytic activity">
    <reaction evidence="1">
        <text>a 1,2-diacyl-sn-glycero-3-phospho-L-serine + H(+) = a 1,2-diacyl-sn-glycero-3-phosphoethanolamine + CO2</text>
        <dbReference type="Rhea" id="RHEA:20828"/>
        <dbReference type="ChEBI" id="CHEBI:15378"/>
        <dbReference type="ChEBI" id="CHEBI:16526"/>
        <dbReference type="ChEBI" id="CHEBI:57262"/>
        <dbReference type="ChEBI" id="CHEBI:64612"/>
        <dbReference type="EC" id="4.1.1.65"/>
    </reaction>
</comment>
<comment type="cofactor">
    <cofactor evidence="1">
        <name>pyruvate</name>
        <dbReference type="ChEBI" id="CHEBI:15361"/>
    </cofactor>
    <text evidence="1">Binds 1 pyruvoyl group covalently per subunit.</text>
</comment>
<comment type="pathway">
    <text evidence="1">Phospholipid metabolism; phosphatidylethanolamine biosynthesis; phosphatidylethanolamine from CDP-diacylglycerol: step 2/2.</text>
</comment>
<comment type="subunit">
    <text evidence="1">Heterodimer of a large membrane-associated beta subunit and a small pyruvoyl-containing alpha subunit.</text>
</comment>
<comment type="subcellular location">
    <subcellularLocation>
        <location evidence="1">Cell membrane</location>
        <topology evidence="1">Peripheral membrane protein</topology>
    </subcellularLocation>
</comment>
<comment type="PTM">
    <text evidence="1">Is synthesized initially as an inactive proenzyme. Formation of the active enzyme involves a self-maturation process in which the active site pyruvoyl group is generated from an internal serine residue via an autocatalytic post-translational modification. Two non-identical subunits are generated from the proenzyme in this reaction, and the pyruvate is formed at the N-terminus of the alpha chain, which is derived from the carboxyl end of the proenzyme. The autoendoproteolytic cleavage occurs by a canonical serine protease mechanism, in which the side chain hydroxyl group of the serine supplies its oxygen atom to form the C-terminus of the beta chain, while the remainder of the serine residue undergoes an oxidative deamination to produce ammonia and the pyruvoyl prosthetic group on the alpha chain. During this reaction, the Ser that is part of the protease active site of the proenzyme becomes the pyruvoyl prosthetic group, which constitutes an essential element of the active site of the mature decarboxylase.</text>
</comment>
<comment type="similarity">
    <text evidence="1">Belongs to the phosphatidylserine decarboxylase family. PSD-B subfamily. Prokaryotic type I sub-subfamily.</text>
</comment>
<keyword id="KW-1003">Cell membrane</keyword>
<keyword id="KW-0210">Decarboxylase</keyword>
<keyword id="KW-0444">Lipid biosynthesis</keyword>
<keyword id="KW-0443">Lipid metabolism</keyword>
<keyword id="KW-0456">Lyase</keyword>
<keyword id="KW-0472">Membrane</keyword>
<keyword id="KW-0594">Phospholipid biosynthesis</keyword>
<keyword id="KW-1208">Phospholipid metabolism</keyword>
<keyword id="KW-0670">Pyruvate</keyword>
<keyword id="KW-1185">Reference proteome</keyword>
<keyword id="KW-0865">Zymogen</keyword>
<dbReference type="EC" id="4.1.1.65" evidence="1"/>
<dbReference type="EMBL" id="BX950851">
    <property type="protein sequence ID" value="CAG76863.1"/>
    <property type="molecule type" value="Genomic_DNA"/>
</dbReference>
<dbReference type="RefSeq" id="WP_011095460.1">
    <property type="nucleotide sequence ID" value="NC_004547.2"/>
</dbReference>
<dbReference type="SMR" id="Q6D035"/>
<dbReference type="STRING" id="218491.ECA3966"/>
<dbReference type="KEGG" id="eca:ECA3966"/>
<dbReference type="PATRIC" id="fig|218491.5.peg.4030"/>
<dbReference type="eggNOG" id="COG0688">
    <property type="taxonomic scope" value="Bacteria"/>
</dbReference>
<dbReference type="HOGENOM" id="CLU_029061_4_1_6"/>
<dbReference type="OrthoDB" id="9802030at2"/>
<dbReference type="UniPathway" id="UPA00558">
    <property type="reaction ID" value="UER00616"/>
</dbReference>
<dbReference type="Proteomes" id="UP000007966">
    <property type="component" value="Chromosome"/>
</dbReference>
<dbReference type="GO" id="GO:0005886">
    <property type="term" value="C:plasma membrane"/>
    <property type="evidence" value="ECO:0007669"/>
    <property type="project" value="UniProtKB-SubCell"/>
</dbReference>
<dbReference type="GO" id="GO:0004609">
    <property type="term" value="F:phosphatidylserine decarboxylase activity"/>
    <property type="evidence" value="ECO:0007669"/>
    <property type="project" value="UniProtKB-UniRule"/>
</dbReference>
<dbReference type="GO" id="GO:0006646">
    <property type="term" value="P:phosphatidylethanolamine biosynthetic process"/>
    <property type="evidence" value="ECO:0007669"/>
    <property type="project" value="UniProtKB-UniRule"/>
</dbReference>
<dbReference type="HAMAP" id="MF_00662">
    <property type="entry name" value="PS_decarb_PSD_B_type1"/>
    <property type="match status" value="1"/>
</dbReference>
<dbReference type="InterPro" id="IPR003817">
    <property type="entry name" value="PS_Dcarbxylase"/>
</dbReference>
<dbReference type="InterPro" id="IPR033177">
    <property type="entry name" value="PSD-B"/>
</dbReference>
<dbReference type="InterPro" id="IPR033178">
    <property type="entry name" value="PSD_type1_pro"/>
</dbReference>
<dbReference type="NCBIfam" id="TIGR00163">
    <property type="entry name" value="PS_decarb"/>
    <property type="match status" value="1"/>
</dbReference>
<dbReference type="PANTHER" id="PTHR10067">
    <property type="entry name" value="PHOSPHATIDYLSERINE DECARBOXYLASE"/>
    <property type="match status" value="1"/>
</dbReference>
<dbReference type="PANTHER" id="PTHR10067:SF6">
    <property type="entry name" value="PHOSPHATIDYLSERINE DECARBOXYLASE PROENZYME, MITOCHONDRIAL"/>
    <property type="match status" value="1"/>
</dbReference>
<dbReference type="Pfam" id="PF02666">
    <property type="entry name" value="PS_Dcarbxylase"/>
    <property type="match status" value="1"/>
</dbReference>
<protein>
    <recommendedName>
        <fullName evidence="1">Phosphatidylserine decarboxylase proenzyme</fullName>
        <ecNumber evidence="1">4.1.1.65</ecNumber>
    </recommendedName>
    <component>
        <recommendedName>
            <fullName evidence="1">Phosphatidylserine decarboxylase alpha chain</fullName>
        </recommendedName>
    </component>
    <component>
        <recommendedName>
            <fullName evidence="1">Phosphatidylserine decarboxylase beta chain</fullName>
        </recommendedName>
    </component>
</protein>
<accession>Q6D035</accession>
<feature type="chain" id="PRO_0000029655" description="Phosphatidylserine decarboxylase beta chain" evidence="1">
    <location>
        <begin position="1"/>
        <end position="253"/>
    </location>
</feature>
<feature type="chain" id="PRO_0000029656" description="Phosphatidylserine decarboxylase alpha chain" evidence="1">
    <location>
        <begin position="254"/>
        <end position="341"/>
    </location>
</feature>
<feature type="region of interest" description="Disordered" evidence="2">
    <location>
        <begin position="287"/>
        <end position="341"/>
    </location>
</feature>
<feature type="active site" description="Charge relay system; for autoendoproteolytic cleavage activity" evidence="1">
    <location>
        <position position="90"/>
    </location>
</feature>
<feature type="active site" description="Charge relay system; for autoendoproteolytic cleavage activity" evidence="1">
    <location>
        <position position="147"/>
    </location>
</feature>
<feature type="active site" description="Charge relay system; for autoendoproteolytic cleavage activity" evidence="1">
    <location>
        <position position="254"/>
    </location>
</feature>
<feature type="active site" description="Schiff-base intermediate with substrate; via pyruvic acid; for decarboxylase activity" evidence="1">
    <location>
        <position position="254"/>
    </location>
</feature>
<feature type="site" description="Cleavage (non-hydrolytic); by autocatalysis" evidence="1">
    <location>
        <begin position="253"/>
        <end position="254"/>
    </location>
</feature>
<feature type="modified residue" description="Pyruvic acid (Ser); by autocatalysis" evidence="1">
    <location>
        <position position="254"/>
    </location>
</feature>
<sequence>MLDNIKIKLQYWLPKIWLTRLAGWGANKRAGKLTKLVIDLFVRQYHVNMQEALQPDTASYRTFNEFFVRPLRPGIRPVDPHAHRLVQPADGVLSQFGPITDGKLIQAKNHDYTLEALLAGNYMMADLFRDGLFATIYLSPRDYHRLHMPCDGVLREMIYVPGDLFSVNLLTADNVPNLFARNERVICLFDTEFGPLAQILVGATIVGSIETVWAGVVTPPREGIIKRWTYPQAGEEGAVVLAKGEEMGRFKLGSTVINLFTAGDLQFAAHLNIMSVTRMGEPFAEVRQDEQTPVVFPEGTELEENDAAQPPVAATSEPVQADGQNPAAEVSGQTGHKPDAP</sequence>
<evidence type="ECO:0000255" key="1">
    <source>
        <dbReference type="HAMAP-Rule" id="MF_00662"/>
    </source>
</evidence>
<evidence type="ECO:0000256" key="2">
    <source>
        <dbReference type="SAM" id="MobiDB-lite"/>
    </source>
</evidence>
<reference key="1">
    <citation type="journal article" date="2004" name="Proc. Natl. Acad. Sci. U.S.A.">
        <title>Genome sequence of the enterobacterial phytopathogen Erwinia carotovora subsp. atroseptica and characterization of virulence factors.</title>
        <authorList>
            <person name="Bell K.S."/>
            <person name="Sebaihia M."/>
            <person name="Pritchard L."/>
            <person name="Holden M.T.G."/>
            <person name="Hyman L.J."/>
            <person name="Holeva M.C."/>
            <person name="Thomson N.R."/>
            <person name="Bentley S.D."/>
            <person name="Churcher L.J.C."/>
            <person name="Mungall K."/>
            <person name="Atkin R."/>
            <person name="Bason N."/>
            <person name="Brooks K."/>
            <person name="Chillingworth T."/>
            <person name="Clark K."/>
            <person name="Doggett J."/>
            <person name="Fraser A."/>
            <person name="Hance Z."/>
            <person name="Hauser H."/>
            <person name="Jagels K."/>
            <person name="Moule S."/>
            <person name="Norbertczak H."/>
            <person name="Ormond D."/>
            <person name="Price C."/>
            <person name="Quail M.A."/>
            <person name="Sanders M."/>
            <person name="Walker D."/>
            <person name="Whitehead S."/>
            <person name="Salmond G.P.C."/>
            <person name="Birch P.R.J."/>
            <person name="Parkhill J."/>
            <person name="Toth I.K."/>
        </authorList>
    </citation>
    <scope>NUCLEOTIDE SEQUENCE [LARGE SCALE GENOMIC DNA]</scope>
    <source>
        <strain>SCRI 1043 / ATCC BAA-672</strain>
    </source>
</reference>
<organism>
    <name type="scientific">Pectobacterium atrosepticum (strain SCRI 1043 / ATCC BAA-672)</name>
    <name type="common">Erwinia carotovora subsp. atroseptica</name>
    <dbReference type="NCBI Taxonomy" id="218491"/>
    <lineage>
        <taxon>Bacteria</taxon>
        <taxon>Pseudomonadati</taxon>
        <taxon>Pseudomonadota</taxon>
        <taxon>Gammaproteobacteria</taxon>
        <taxon>Enterobacterales</taxon>
        <taxon>Pectobacteriaceae</taxon>
        <taxon>Pectobacterium</taxon>
    </lineage>
</organism>
<gene>
    <name evidence="1" type="primary">psd</name>
    <name type="ordered locus">ECA3966</name>
</gene>